<keyword id="KW-0249">Electron transport</keyword>
<keyword id="KW-0349">Heme</keyword>
<keyword id="KW-0408">Iron</keyword>
<keyword id="KW-0472">Membrane</keyword>
<keyword id="KW-0479">Metal-binding</keyword>
<keyword id="KW-0496">Mitochondrion</keyword>
<keyword id="KW-0999">Mitochondrion inner membrane</keyword>
<keyword id="KW-0679">Respiratory chain</keyword>
<keyword id="KW-0812">Transmembrane</keyword>
<keyword id="KW-1133">Transmembrane helix</keyword>
<keyword id="KW-0813">Transport</keyword>
<keyword id="KW-0830">Ubiquinone</keyword>
<accession>Q9G3N4</accession>
<accession>Q9G3N3</accession>
<proteinExistence type="inferred from homology"/>
<comment type="function">
    <text evidence="2">Component of the ubiquinol-cytochrome c reductase complex (complex III or cytochrome b-c1 complex) that is part of the mitochondrial respiratory chain. The b-c1 complex mediates electron transfer from ubiquinol to cytochrome c. Contributes to the generation of a proton gradient across the mitochondrial membrane that is then used for ATP synthesis.</text>
</comment>
<comment type="cofactor">
    <cofactor evidence="2">
        <name>heme b</name>
        <dbReference type="ChEBI" id="CHEBI:60344"/>
    </cofactor>
    <text evidence="2">Binds 2 heme b groups non-covalently.</text>
</comment>
<comment type="subunit">
    <text evidence="2">The cytochrome bc1 complex contains 11 subunits: 3 respiratory subunits (MT-CYB, CYC1 and UQCRFS1), 2 core proteins (UQCRC1 and UQCRC2) and 6 low-molecular weight proteins (UQCRH/QCR6, UQCRB/QCR7, UQCRQ/QCR8, UQCR10/QCR9, UQCR11/QCR10 and a cleavage product of UQCRFS1). This cytochrome bc1 complex then forms a dimer.</text>
</comment>
<comment type="subcellular location">
    <subcellularLocation>
        <location evidence="2">Mitochondrion inner membrane</location>
        <topology evidence="2">Multi-pass membrane protein</topology>
    </subcellularLocation>
</comment>
<comment type="miscellaneous">
    <text evidence="1">Heme 1 (or BL or b562) is low-potential and absorbs at about 562 nm, and heme 2 (or BH or b566) is high-potential and absorbs at about 566 nm.</text>
</comment>
<comment type="similarity">
    <text evidence="3 4">Belongs to the cytochrome b family.</text>
</comment>
<comment type="caution">
    <text evidence="2">The full-length protein contains only eight transmembrane helices, not nine as predicted by bioinformatics tools.</text>
</comment>
<gene>
    <name type="primary">MT-CYB</name>
    <name type="synonym">COB</name>
    <name type="synonym">CYTB</name>
    <name type="synonym">MTCYB</name>
</gene>
<reference key="1">
    <citation type="submission" date="2000-12" db="EMBL/GenBank/DDBJ databases">
        <title>Phylogeny and systematics of myospalacinae (rodentia) inferred from mitochondrial genes sequences.</title>
        <authorList>
            <person name="Zhou C.Q."/>
            <person name="Zhou K.Y."/>
            <person name="Wang Y.Q."/>
            <person name="Zhang S.L."/>
        </authorList>
    </citation>
    <scope>NUCLEOTIDE SEQUENCE [GENOMIC DNA]</scope>
    <source>
        <strain>Isolate 1</strain>
        <strain>Isolate 2</strain>
    </source>
</reference>
<organism>
    <name type="scientific">Eospalax rothschildi</name>
    <name type="common">Rothschild's zokor</name>
    <dbReference type="NCBI Taxonomy" id="146136"/>
    <lineage>
        <taxon>Eukaryota</taxon>
        <taxon>Metazoa</taxon>
        <taxon>Chordata</taxon>
        <taxon>Craniata</taxon>
        <taxon>Vertebrata</taxon>
        <taxon>Euteleostomi</taxon>
        <taxon>Mammalia</taxon>
        <taxon>Eutheria</taxon>
        <taxon>Euarchontoglires</taxon>
        <taxon>Glires</taxon>
        <taxon>Rodentia</taxon>
        <taxon>Myomorpha</taxon>
        <taxon>Muroidea</taxon>
        <taxon>Spalacidae</taxon>
        <taxon>Myospalacinae</taxon>
        <taxon>Eospalax</taxon>
    </lineage>
</organism>
<sequence length="379" mass="42890">MLNMRKSHPLLKIINHSLIDLPAPSNISMWWNFGSLLGICLSLQIITGLFLAMHYTSDTLTAFSSVTHICRDVNYGWIIRYLHANGASMFFICLFLHVGRGMYYGSYNYLETWNIGVILLFTVMATAFMGYVLPWGQMSFWGATVITNLLSAIPYVGTSLVEWIWGGFSVDKATLTRFFAFHFILPFIITALVIVHLLFLHETGSNNPTGLNSNADKIPFHPYYTIKDMLGFIIMFLFLMILVLFSPDMLGDPDNYTPANPLNTPPHIKPEWYFLFAYAILRSIPNKLGGVLALILSILILILLPLLHTSAQRSLMFRPISQCLFWILVADLFTLTWIGGQPVEHPFIIIGQLASILYFLIILVLMPLAGILENKIMKV</sequence>
<dbReference type="EMBL" id="AF326267">
    <property type="protein sequence ID" value="AAG48719.1"/>
    <property type="molecule type" value="Genomic_DNA"/>
</dbReference>
<dbReference type="EMBL" id="AF326268">
    <property type="protein sequence ID" value="AAG48720.1"/>
    <property type="molecule type" value="Genomic_DNA"/>
</dbReference>
<dbReference type="SMR" id="Q9G3N4"/>
<dbReference type="GO" id="GO:0005743">
    <property type="term" value="C:mitochondrial inner membrane"/>
    <property type="evidence" value="ECO:0007669"/>
    <property type="project" value="UniProtKB-SubCell"/>
</dbReference>
<dbReference type="GO" id="GO:0045275">
    <property type="term" value="C:respiratory chain complex III"/>
    <property type="evidence" value="ECO:0007669"/>
    <property type="project" value="InterPro"/>
</dbReference>
<dbReference type="GO" id="GO:0046872">
    <property type="term" value="F:metal ion binding"/>
    <property type="evidence" value="ECO:0007669"/>
    <property type="project" value="UniProtKB-KW"/>
</dbReference>
<dbReference type="GO" id="GO:0008121">
    <property type="term" value="F:ubiquinol-cytochrome-c reductase activity"/>
    <property type="evidence" value="ECO:0007669"/>
    <property type="project" value="InterPro"/>
</dbReference>
<dbReference type="GO" id="GO:0006122">
    <property type="term" value="P:mitochondrial electron transport, ubiquinol to cytochrome c"/>
    <property type="evidence" value="ECO:0007669"/>
    <property type="project" value="TreeGrafter"/>
</dbReference>
<dbReference type="CDD" id="cd00290">
    <property type="entry name" value="cytochrome_b_C"/>
    <property type="match status" value="1"/>
</dbReference>
<dbReference type="CDD" id="cd00284">
    <property type="entry name" value="Cytochrome_b_N"/>
    <property type="match status" value="1"/>
</dbReference>
<dbReference type="FunFam" id="1.20.810.10:FF:000002">
    <property type="entry name" value="Cytochrome b"/>
    <property type="match status" value="1"/>
</dbReference>
<dbReference type="Gene3D" id="1.20.810.10">
    <property type="entry name" value="Cytochrome Bc1 Complex, Chain C"/>
    <property type="match status" value="1"/>
</dbReference>
<dbReference type="InterPro" id="IPR005798">
    <property type="entry name" value="Cyt_b/b6_C"/>
</dbReference>
<dbReference type="InterPro" id="IPR036150">
    <property type="entry name" value="Cyt_b/b6_C_sf"/>
</dbReference>
<dbReference type="InterPro" id="IPR005797">
    <property type="entry name" value="Cyt_b/b6_N"/>
</dbReference>
<dbReference type="InterPro" id="IPR027387">
    <property type="entry name" value="Cytb/b6-like_sf"/>
</dbReference>
<dbReference type="InterPro" id="IPR030689">
    <property type="entry name" value="Cytochrome_b"/>
</dbReference>
<dbReference type="InterPro" id="IPR048260">
    <property type="entry name" value="Cytochrome_b_C_euk/bac"/>
</dbReference>
<dbReference type="InterPro" id="IPR048259">
    <property type="entry name" value="Cytochrome_b_N_euk/bac"/>
</dbReference>
<dbReference type="InterPro" id="IPR016174">
    <property type="entry name" value="Di-haem_cyt_TM"/>
</dbReference>
<dbReference type="PANTHER" id="PTHR19271">
    <property type="entry name" value="CYTOCHROME B"/>
    <property type="match status" value="1"/>
</dbReference>
<dbReference type="PANTHER" id="PTHR19271:SF16">
    <property type="entry name" value="CYTOCHROME B"/>
    <property type="match status" value="1"/>
</dbReference>
<dbReference type="Pfam" id="PF00032">
    <property type="entry name" value="Cytochrom_B_C"/>
    <property type="match status" value="1"/>
</dbReference>
<dbReference type="Pfam" id="PF00033">
    <property type="entry name" value="Cytochrome_B"/>
    <property type="match status" value="1"/>
</dbReference>
<dbReference type="PIRSF" id="PIRSF038885">
    <property type="entry name" value="COB"/>
    <property type="match status" value="1"/>
</dbReference>
<dbReference type="SUPFAM" id="SSF81648">
    <property type="entry name" value="a domain/subunit of cytochrome bc1 complex (Ubiquinol-cytochrome c reductase)"/>
    <property type="match status" value="1"/>
</dbReference>
<dbReference type="SUPFAM" id="SSF81342">
    <property type="entry name" value="Transmembrane di-heme cytochromes"/>
    <property type="match status" value="1"/>
</dbReference>
<dbReference type="PROSITE" id="PS51003">
    <property type="entry name" value="CYTB_CTER"/>
    <property type="match status" value="1"/>
</dbReference>
<dbReference type="PROSITE" id="PS51002">
    <property type="entry name" value="CYTB_NTER"/>
    <property type="match status" value="1"/>
</dbReference>
<feature type="chain" id="PRO_0000255053" description="Cytochrome b">
    <location>
        <begin position="1"/>
        <end position="379"/>
    </location>
</feature>
<feature type="transmembrane region" description="Helical" evidence="2">
    <location>
        <begin position="33"/>
        <end position="53"/>
    </location>
</feature>
<feature type="transmembrane region" description="Helical" evidence="2">
    <location>
        <begin position="77"/>
        <end position="98"/>
    </location>
</feature>
<feature type="transmembrane region" description="Helical" evidence="2">
    <location>
        <begin position="113"/>
        <end position="133"/>
    </location>
</feature>
<feature type="transmembrane region" description="Helical" evidence="2">
    <location>
        <begin position="178"/>
        <end position="198"/>
    </location>
</feature>
<feature type="transmembrane region" description="Helical" evidence="2">
    <location>
        <begin position="226"/>
        <end position="246"/>
    </location>
</feature>
<feature type="transmembrane region" description="Helical" evidence="2">
    <location>
        <begin position="288"/>
        <end position="308"/>
    </location>
</feature>
<feature type="transmembrane region" description="Helical" evidence="2">
    <location>
        <begin position="320"/>
        <end position="340"/>
    </location>
</feature>
<feature type="transmembrane region" description="Helical" evidence="2">
    <location>
        <begin position="347"/>
        <end position="367"/>
    </location>
</feature>
<feature type="binding site" description="axial binding residue" evidence="2">
    <location>
        <position position="83"/>
    </location>
    <ligand>
        <name>heme b</name>
        <dbReference type="ChEBI" id="CHEBI:60344"/>
        <label>b562</label>
    </ligand>
    <ligandPart>
        <name>Fe</name>
        <dbReference type="ChEBI" id="CHEBI:18248"/>
    </ligandPart>
</feature>
<feature type="binding site" description="axial binding residue" evidence="2">
    <location>
        <position position="97"/>
    </location>
    <ligand>
        <name>heme b</name>
        <dbReference type="ChEBI" id="CHEBI:60344"/>
        <label>b566</label>
    </ligand>
    <ligandPart>
        <name>Fe</name>
        <dbReference type="ChEBI" id="CHEBI:18248"/>
    </ligandPart>
</feature>
<feature type="binding site" description="axial binding residue" evidence="2">
    <location>
        <position position="182"/>
    </location>
    <ligand>
        <name>heme b</name>
        <dbReference type="ChEBI" id="CHEBI:60344"/>
        <label>b562</label>
    </ligand>
    <ligandPart>
        <name>Fe</name>
        <dbReference type="ChEBI" id="CHEBI:18248"/>
    </ligandPart>
</feature>
<feature type="binding site" description="axial binding residue" evidence="2">
    <location>
        <position position="196"/>
    </location>
    <ligand>
        <name>heme b</name>
        <dbReference type="ChEBI" id="CHEBI:60344"/>
        <label>b566</label>
    </ligand>
    <ligandPart>
        <name>Fe</name>
        <dbReference type="ChEBI" id="CHEBI:18248"/>
    </ligandPart>
</feature>
<feature type="binding site" evidence="2">
    <location>
        <position position="201"/>
    </location>
    <ligand>
        <name>a ubiquinone</name>
        <dbReference type="ChEBI" id="CHEBI:16389"/>
    </ligand>
</feature>
<feature type="sequence variant" description="In strain: Isolate 2.">
    <original>I</original>
    <variation>M</variation>
    <location>
        <position position="194"/>
    </location>
</feature>
<feature type="sequence variant" description="In strain: Isolate 2.">
    <original>SNN</original>
    <variation>VKY</variation>
    <location>
        <begin position="205"/>
        <end position="207"/>
    </location>
</feature>
<protein>
    <recommendedName>
        <fullName>Cytochrome b</fullName>
    </recommendedName>
    <alternativeName>
        <fullName>Complex III subunit 3</fullName>
    </alternativeName>
    <alternativeName>
        <fullName>Complex III subunit III</fullName>
    </alternativeName>
    <alternativeName>
        <fullName>Cytochrome b-c1 complex subunit 3</fullName>
    </alternativeName>
    <alternativeName>
        <fullName>Ubiquinol-cytochrome-c reductase complex cytochrome b subunit</fullName>
    </alternativeName>
</protein>
<geneLocation type="mitochondrion"/>
<name>CYB_EOSRO</name>
<evidence type="ECO:0000250" key="1"/>
<evidence type="ECO:0000250" key="2">
    <source>
        <dbReference type="UniProtKB" id="P00157"/>
    </source>
</evidence>
<evidence type="ECO:0000255" key="3">
    <source>
        <dbReference type="PROSITE-ProRule" id="PRU00967"/>
    </source>
</evidence>
<evidence type="ECO:0000255" key="4">
    <source>
        <dbReference type="PROSITE-ProRule" id="PRU00968"/>
    </source>
</evidence>